<proteinExistence type="evidence at transcript level"/>
<feature type="chain" id="PRO_0000440888" description="Putative protein-methionine-sulfoxide reductase subunit YedZ1">
    <location>
        <begin position="1"/>
        <end position="262"/>
    </location>
</feature>
<dbReference type="EMBL" id="CP003153">
    <property type="protein sequence ID" value="AEV24579.1"/>
    <property type="molecule type" value="Genomic_DNA"/>
</dbReference>
<dbReference type="RefSeq" id="WP_014235281.1">
    <property type="nucleotide sequence ID" value="NC_016616.1"/>
</dbReference>
<dbReference type="SMR" id="G8QM63"/>
<dbReference type="STRING" id="640081.Dsui_0157"/>
<dbReference type="KEGG" id="dsu:Dsui_0157"/>
<dbReference type="eggNOG" id="COG2041">
    <property type="taxonomic scope" value="Bacteria"/>
</dbReference>
<dbReference type="HOGENOM" id="CLU_045520_2_0_4"/>
<dbReference type="Proteomes" id="UP000005633">
    <property type="component" value="Chromosome"/>
</dbReference>
<dbReference type="Gene3D" id="3.90.420.10">
    <property type="entry name" value="Oxidoreductase, molybdopterin-binding domain"/>
    <property type="match status" value="1"/>
</dbReference>
<dbReference type="InterPro" id="IPR000572">
    <property type="entry name" value="OxRdtase_Mopterin-bd_dom"/>
</dbReference>
<dbReference type="InterPro" id="IPR036374">
    <property type="entry name" value="OxRdtase_Mopterin-bd_sf"/>
</dbReference>
<dbReference type="PANTHER" id="PTHR43032:SF2">
    <property type="entry name" value="BLL0505 PROTEIN"/>
    <property type="match status" value="1"/>
</dbReference>
<dbReference type="PANTHER" id="PTHR43032">
    <property type="entry name" value="PROTEIN-METHIONINE-SULFOXIDE REDUCTASE"/>
    <property type="match status" value="1"/>
</dbReference>
<dbReference type="Pfam" id="PF00174">
    <property type="entry name" value="Oxidored_molyb"/>
    <property type="match status" value="1"/>
</dbReference>
<dbReference type="SUPFAM" id="SSF56524">
    <property type="entry name" value="Oxidoreductase molybdopterin-binding domain"/>
    <property type="match status" value="1"/>
</dbReference>
<comment type="function">
    <text evidence="4">Part of the YedY1-YedZ1 system that may repair oxidized proteins containing methionine sulfoxide residues (Met-O).</text>
</comment>
<comment type="induction">
    <text evidence="1">Part of the SigF regulon, induced by chlorite under positive control of SigF. Part of the probable yedZ1-yedY1-mrpX operon.</text>
</comment>
<comment type="disruption phenotype">
    <text evidence="1">Growth somewhat inhibited by chlorite.</text>
</comment>
<comment type="similarity">
    <text evidence="3">Belongs to the MsrP family.</text>
</comment>
<sequence length="262" mass="29489">MFPKKNRPMIANGDRVLKDAFKDVGKYIELPARRAFLQRSMTLGGLSLLTGCAITDDESVESALLAMSRFNNCVQGWLFDPNQLAPIYPESMITRPFPFNAYYGDDEVREVDAASFRLEVSGLVSDKHAWTLDELHALPQVDQVTRHICVEGWSAIGKWSGVPFTTFLRLVGADLDAKYVGFKCADDYYTSIDMATALHPQTQLTLSYDGQTLPARYGFPMKLRMPTKLGYKNPKYIQALFVTNSYPGGYWEDQGYNWFGGS</sequence>
<reference key="1">
    <citation type="journal article" date="2012" name="J. Bacteriol.">
        <title>Complete genome sequence of the anaerobic perchlorate-reducing bacterium Azospira suillum strain PS.</title>
        <authorList>
            <person name="Byrne-Bailey K.G."/>
            <person name="Coates J.D."/>
        </authorList>
    </citation>
    <scope>NUCLEOTIDE SEQUENCE [LARGE SCALE GENOMIC DNA]</scope>
    <source>
        <strain>ATCC BAA-33 / DSM 13638 / PS</strain>
    </source>
</reference>
<reference key="2">
    <citation type="journal article" date="2015" name="MBio">
        <title>Novel mechanism for scavenging of hypochlorite involving a periplasmic methionine-rich peptide and methionine sulfoxide reductase.</title>
        <authorList>
            <person name="Melnyk R.A."/>
            <person name="Youngblut M.D."/>
            <person name="Clark I.C."/>
            <person name="Carlson H.K."/>
            <person name="Wetmore K.M."/>
            <person name="Price M.N."/>
            <person name="Iavarone A.T."/>
            <person name="Deutschbauer A.M."/>
            <person name="Arkin A.P."/>
            <person name="Coates J.D."/>
        </authorList>
    </citation>
    <scope>FUNCTION</scope>
    <scope>INDUCTION</scope>
    <scope>DISRUPTION PHENOTYPE</scope>
    <source>
        <strain>ATCC BAA-33 / DSM 13638 / PS</strain>
    </source>
</reference>
<name>YEDY1_AZOOP</name>
<evidence type="ECO:0000269" key="1">
    <source>
    </source>
</evidence>
<evidence type="ECO:0000303" key="2">
    <source>
    </source>
</evidence>
<evidence type="ECO:0000305" key="3"/>
<evidence type="ECO:0000305" key="4">
    <source>
    </source>
</evidence>
<organism>
    <name type="scientific">Azospira oryzae (strain ATCC BAA-33 / DSM 13638 / PS)</name>
    <name type="common">Dechlorosoma suillum</name>
    <dbReference type="NCBI Taxonomy" id="640081"/>
    <lineage>
        <taxon>Bacteria</taxon>
        <taxon>Pseudomonadati</taxon>
        <taxon>Pseudomonadota</taxon>
        <taxon>Betaproteobacteria</taxon>
        <taxon>Rhodocyclales</taxon>
        <taxon>Rhodocyclaceae</taxon>
        <taxon>Azospira</taxon>
    </lineage>
</organism>
<protein>
    <recommendedName>
        <fullName evidence="2">Putative protein-methionine-sulfoxide reductase subunit YedZ1</fullName>
    </recommendedName>
</protein>
<accession>G8QM63</accession>
<gene>
    <name evidence="2" type="primary">yedY1</name>
    <name type="ordered locus">Dsui_0157</name>
</gene>
<keyword id="KW-0346">Stress response</keyword>